<protein>
    <recommendedName>
        <fullName evidence="1">DNA mismatch repair protein MutS</fullName>
    </recommendedName>
</protein>
<gene>
    <name evidence="1" type="primary">mutS</name>
    <name type="ordered locus">PSPPH_3807</name>
</gene>
<sequence>MNKAISDLSSHTPMMQQYWKLKNQHLDQLMFYRMGDFYEIFYEDAKKAAKLLDITLTARGQSAGQSIPMCGIPYHAAEGYLAKLVKLGESVVICEQIGDPATSKGPVDRQVVRIITPGTISDEALLDERRDNLIAAVLGDERLFGLAVLDITSGNFSVLEIKGWENLLAELERINPVELLIPDDWPQGLPAEKRRGARRRAPWDFERDSAHKSLCQQFSTQDLKGFGCENLTLAIGAAGCLLSYAKETQRTALPHLRSLRHERLDDTVILDAASRRNLELDTNLSGGRDNTLQSVMDRCQTAMGTRLLTRWLNRPLRDLTILQARQTSITCFLERYRFENLQPQLKEIGDIERILARIGLRNARPRDLARLRDALSALPELQQAMTDLEAPHLQQLAQTASTYPELADLLQRAIIDNPPAVIRDGGVLKTGYDAELDDLQSLSENAGQFLIDLEAREKARTGLANLKVGYNRVHGYFIELPSKQAEQAPADYIRRQTLKGAERFITPELKEFEDKALSAKSRALAREKMLYEALLEDLIGHLAPLQDTAAALAELDVLSNLAERALNLDLNCPRFVAEPCMRIEQGRHPVVEQVLSTPFVANDLALDDSTRMLVITGPNMGGKSTYMRQTALIVLLAHIGSFVPAASCELSLVDRIFTRIGSSDDLAGGRSTFMVEMSETANILHNATDKSLVLMDEVGRGTSTFDGLSLAWAAAECLAQLRAYTLFATHYFELTVLPESEPLVSNVHLNATEHNERIVFLHRVLPGPASQSYGLAVAQLAGVPGKVISRAKEHLQRLETTSLPHEQPRAKPGKPAVPQQSDMFASLPHPVLDELSKVKVDDMTPRQALDLLYTLQTRL</sequence>
<comment type="function">
    <text evidence="1">This protein is involved in the repair of mismatches in DNA. It is possible that it carries out the mismatch recognition step. This protein has a weak ATPase activity.</text>
</comment>
<comment type="similarity">
    <text evidence="1">Belongs to the DNA mismatch repair MutS family.</text>
</comment>
<keyword id="KW-0067">ATP-binding</keyword>
<keyword id="KW-0227">DNA damage</keyword>
<keyword id="KW-0234">DNA repair</keyword>
<keyword id="KW-0238">DNA-binding</keyword>
<keyword id="KW-0547">Nucleotide-binding</keyword>
<dbReference type="EMBL" id="CP000058">
    <property type="protein sequence ID" value="AAZ37785.1"/>
    <property type="molecule type" value="Genomic_DNA"/>
</dbReference>
<dbReference type="SMR" id="Q48F92"/>
<dbReference type="KEGG" id="psp:PSPPH_3807"/>
<dbReference type="eggNOG" id="COG0249">
    <property type="taxonomic scope" value="Bacteria"/>
</dbReference>
<dbReference type="HOGENOM" id="CLU_002472_4_0_6"/>
<dbReference type="Proteomes" id="UP000000551">
    <property type="component" value="Chromosome"/>
</dbReference>
<dbReference type="GO" id="GO:0005829">
    <property type="term" value="C:cytosol"/>
    <property type="evidence" value="ECO:0007669"/>
    <property type="project" value="TreeGrafter"/>
</dbReference>
<dbReference type="GO" id="GO:0005524">
    <property type="term" value="F:ATP binding"/>
    <property type="evidence" value="ECO:0007669"/>
    <property type="project" value="UniProtKB-UniRule"/>
</dbReference>
<dbReference type="GO" id="GO:0140664">
    <property type="term" value="F:ATP-dependent DNA damage sensor activity"/>
    <property type="evidence" value="ECO:0007669"/>
    <property type="project" value="InterPro"/>
</dbReference>
<dbReference type="GO" id="GO:0003684">
    <property type="term" value="F:damaged DNA binding"/>
    <property type="evidence" value="ECO:0007669"/>
    <property type="project" value="UniProtKB-UniRule"/>
</dbReference>
<dbReference type="GO" id="GO:0030983">
    <property type="term" value="F:mismatched DNA binding"/>
    <property type="evidence" value="ECO:0007669"/>
    <property type="project" value="InterPro"/>
</dbReference>
<dbReference type="GO" id="GO:0006298">
    <property type="term" value="P:mismatch repair"/>
    <property type="evidence" value="ECO:0007669"/>
    <property type="project" value="UniProtKB-UniRule"/>
</dbReference>
<dbReference type="CDD" id="cd03284">
    <property type="entry name" value="ABC_MutS1"/>
    <property type="match status" value="1"/>
</dbReference>
<dbReference type="FunFam" id="1.10.1420.10:FF:000002">
    <property type="entry name" value="DNA mismatch repair protein MutS"/>
    <property type="match status" value="1"/>
</dbReference>
<dbReference type="FunFam" id="3.40.1170.10:FF:000001">
    <property type="entry name" value="DNA mismatch repair protein MutS"/>
    <property type="match status" value="1"/>
</dbReference>
<dbReference type="FunFam" id="3.40.50.300:FF:000283">
    <property type="entry name" value="DNA mismatch repair protein MutS"/>
    <property type="match status" value="1"/>
</dbReference>
<dbReference type="Gene3D" id="1.10.1420.10">
    <property type="match status" value="2"/>
</dbReference>
<dbReference type="Gene3D" id="6.10.140.430">
    <property type="match status" value="1"/>
</dbReference>
<dbReference type="Gene3D" id="3.40.1170.10">
    <property type="entry name" value="DNA repair protein MutS, domain I"/>
    <property type="match status" value="1"/>
</dbReference>
<dbReference type="Gene3D" id="3.30.420.110">
    <property type="entry name" value="MutS, connector domain"/>
    <property type="match status" value="1"/>
</dbReference>
<dbReference type="Gene3D" id="3.40.50.300">
    <property type="entry name" value="P-loop containing nucleotide triphosphate hydrolases"/>
    <property type="match status" value="1"/>
</dbReference>
<dbReference type="HAMAP" id="MF_00096">
    <property type="entry name" value="MutS"/>
    <property type="match status" value="1"/>
</dbReference>
<dbReference type="InterPro" id="IPR005748">
    <property type="entry name" value="DNA_mismatch_repair_MutS"/>
</dbReference>
<dbReference type="InterPro" id="IPR007695">
    <property type="entry name" value="DNA_mismatch_repair_MutS-lik_N"/>
</dbReference>
<dbReference type="InterPro" id="IPR017261">
    <property type="entry name" value="DNA_mismatch_repair_MutS/MSH"/>
</dbReference>
<dbReference type="InterPro" id="IPR000432">
    <property type="entry name" value="DNA_mismatch_repair_MutS_C"/>
</dbReference>
<dbReference type="InterPro" id="IPR007861">
    <property type="entry name" value="DNA_mismatch_repair_MutS_clamp"/>
</dbReference>
<dbReference type="InterPro" id="IPR007696">
    <property type="entry name" value="DNA_mismatch_repair_MutS_core"/>
</dbReference>
<dbReference type="InterPro" id="IPR016151">
    <property type="entry name" value="DNA_mismatch_repair_MutS_N"/>
</dbReference>
<dbReference type="InterPro" id="IPR036187">
    <property type="entry name" value="DNA_mismatch_repair_MutS_sf"/>
</dbReference>
<dbReference type="InterPro" id="IPR007860">
    <property type="entry name" value="DNA_mmatch_repair_MutS_con_dom"/>
</dbReference>
<dbReference type="InterPro" id="IPR045076">
    <property type="entry name" value="MutS"/>
</dbReference>
<dbReference type="InterPro" id="IPR036678">
    <property type="entry name" value="MutS_con_dom_sf"/>
</dbReference>
<dbReference type="InterPro" id="IPR027417">
    <property type="entry name" value="P-loop_NTPase"/>
</dbReference>
<dbReference type="NCBIfam" id="TIGR01070">
    <property type="entry name" value="mutS1"/>
    <property type="match status" value="1"/>
</dbReference>
<dbReference type="NCBIfam" id="NF003810">
    <property type="entry name" value="PRK05399.1"/>
    <property type="match status" value="1"/>
</dbReference>
<dbReference type="PANTHER" id="PTHR11361:SF34">
    <property type="entry name" value="DNA MISMATCH REPAIR PROTEIN MSH1, MITOCHONDRIAL"/>
    <property type="match status" value="1"/>
</dbReference>
<dbReference type="PANTHER" id="PTHR11361">
    <property type="entry name" value="DNA MISMATCH REPAIR PROTEIN MUTS FAMILY MEMBER"/>
    <property type="match status" value="1"/>
</dbReference>
<dbReference type="Pfam" id="PF01624">
    <property type="entry name" value="MutS_I"/>
    <property type="match status" value="1"/>
</dbReference>
<dbReference type="Pfam" id="PF05188">
    <property type="entry name" value="MutS_II"/>
    <property type="match status" value="1"/>
</dbReference>
<dbReference type="Pfam" id="PF05192">
    <property type="entry name" value="MutS_III"/>
    <property type="match status" value="1"/>
</dbReference>
<dbReference type="Pfam" id="PF05190">
    <property type="entry name" value="MutS_IV"/>
    <property type="match status" value="1"/>
</dbReference>
<dbReference type="Pfam" id="PF00488">
    <property type="entry name" value="MutS_V"/>
    <property type="match status" value="1"/>
</dbReference>
<dbReference type="PIRSF" id="PIRSF037677">
    <property type="entry name" value="DNA_mis_repair_Msh6"/>
    <property type="match status" value="1"/>
</dbReference>
<dbReference type="SMART" id="SM00534">
    <property type="entry name" value="MUTSac"/>
    <property type="match status" value="1"/>
</dbReference>
<dbReference type="SMART" id="SM00533">
    <property type="entry name" value="MUTSd"/>
    <property type="match status" value="1"/>
</dbReference>
<dbReference type="SUPFAM" id="SSF55271">
    <property type="entry name" value="DNA repair protein MutS, domain I"/>
    <property type="match status" value="1"/>
</dbReference>
<dbReference type="SUPFAM" id="SSF53150">
    <property type="entry name" value="DNA repair protein MutS, domain II"/>
    <property type="match status" value="1"/>
</dbReference>
<dbReference type="SUPFAM" id="SSF48334">
    <property type="entry name" value="DNA repair protein MutS, domain III"/>
    <property type="match status" value="1"/>
</dbReference>
<dbReference type="SUPFAM" id="SSF52540">
    <property type="entry name" value="P-loop containing nucleoside triphosphate hydrolases"/>
    <property type="match status" value="1"/>
</dbReference>
<dbReference type="PROSITE" id="PS00486">
    <property type="entry name" value="DNA_MISMATCH_REPAIR_2"/>
    <property type="match status" value="1"/>
</dbReference>
<evidence type="ECO:0000255" key="1">
    <source>
        <dbReference type="HAMAP-Rule" id="MF_00096"/>
    </source>
</evidence>
<evidence type="ECO:0000256" key="2">
    <source>
        <dbReference type="SAM" id="MobiDB-lite"/>
    </source>
</evidence>
<name>MUTS_PSE14</name>
<organism>
    <name type="scientific">Pseudomonas savastanoi pv. phaseolicola (strain 1448A / Race 6)</name>
    <name type="common">Pseudomonas syringae pv. phaseolicola (strain 1448A / Race 6)</name>
    <dbReference type="NCBI Taxonomy" id="264730"/>
    <lineage>
        <taxon>Bacteria</taxon>
        <taxon>Pseudomonadati</taxon>
        <taxon>Pseudomonadota</taxon>
        <taxon>Gammaproteobacteria</taxon>
        <taxon>Pseudomonadales</taxon>
        <taxon>Pseudomonadaceae</taxon>
        <taxon>Pseudomonas</taxon>
    </lineage>
</organism>
<feature type="chain" id="PRO_0000224394" description="DNA mismatch repair protein MutS">
    <location>
        <begin position="1"/>
        <end position="859"/>
    </location>
</feature>
<feature type="region of interest" description="Disordered" evidence="2">
    <location>
        <begin position="799"/>
        <end position="821"/>
    </location>
</feature>
<feature type="binding site" evidence="1">
    <location>
        <begin position="617"/>
        <end position="624"/>
    </location>
    <ligand>
        <name>ATP</name>
        <dbReference type="ChEBI" id="CHEBI:30616"/>
    </ligand>
</feature>
<proteinExistence type="inferred from homology"/>
<accession>Q48F92</accession>
<reference key="1">
    <citation type="journal article" date="2005" name="J. Bacteriol.">
        <title>Whole-genome sequence analysis of Pseudomonas syringae pv. phaseolicola 1448A reveals divergence among pathovars in genes involved in virulence and transposition.</title>
        <authorList>
            <person name="Joardar V."/>
            <person name="Lindeberg M."/>
            <person name="Jackson R.W."/>
            <person name="Selengut J."/>
            <person name="Dodson R."/>
            <person name="Brinkac L.M."/>
            <person name="Daugherty S.C."/>
            <person name="DeBoy R.T."/>
            <person name="Durkin A.S."/>
            <person name="Gwinn Giglio M."/>
            <person name="Madupu R."/>
            <person name="Nelson W.C."/>
            <person name="Rosovitz M.J."/>
            <person name="Sullivan S.A."/>
            <person name="Crabtree J."/>
            <person name="Creasy T."/>
            <person name="Davidsen T.M."/>
            <person name="Haft D.H."/>
            <person name="Zafar N."/>
            <person name="Zhou L."/>
            <person name="Halpin R."/>
            <person name="Holley T."/>
            <person name="Khouri H.M."/>
            <person name="Feldblyum T.V."/>
            <person name="White O."/>
            <person name="Fraser C.M."/>
            <person name="Chatterjee A.K."/>
            <person name="Cartinhour S."/>
            <person name="Schneider D."/>
            <person name="Mansfield J.W."/>
            <person name="Collmer A."/>
            <person name="Buell R."/>
        </authorList>
    </citation>
    <scope>NUCLEOTIDE SEQUENCE [LARGE SCALE GENOMIC DNA]</scope>
    <source>
        <strain>1448A / Race 6</strain>
    </source>
</reference>